<accession>B0VYX6</accession>
<reference key="1">
    <citation type="journal article" date="2008" name="BMC Evol. Biol.">
        <title>Molecular evolution of the cytochrome c oxidase subunit 5A gene in primates.</title>
        <authorList>
            <person name="Uddin M."/>
            <person name="Opazo J.C."/>
            <person name="Wildman D.E."/>
            <person name="Sherwood C.C."/>
            <person name="Hof P.R."/>
            <person name="Goodman M."/>
            <person name="Grossman L.I."/>
        </authorList>
    </citation>
    <scope>NUCLEOTIDE SEQUENCE [MRNA]</scope>
</reference>
<name>COX5A_SYMSY</name>
<comment type="function">
    <text evidence="2">Component of the cytochrome c oxidase, the last enzyme in the mitochondrial electron transport chain which drives oxidative phosphorylation. The respiratory chain contains 3 multisubunit complexes succinate dehydrogenase (complex II, CII), ubiquinol-cytochrome c oxidoreductase (cytochrome b-c1 complex, complex III, CIII) and cytochrome c oxidase (complex IV, CIV), that cooperate to transfer electrons derived from NADH and succinate to molecular oxygen, creating an electrochemical gradient over the inner membrane that drives transmembrane transport and the ATP synthase. Cytochrome c oxidase is the component of the respiratory chain that catalyzes the reduction of oxygen to water. Electrons originating from reduced cytochrome c in the intermembrane space (IMS) are transferred via the dinuclear copper A center (CU(A)) of subunit 2 and heme A of subunit 1 to the active site in subunit 1, a binuclear center (BNC) formed by heme A3 and copper B (CU(B)). The BNC reduces molecular oxygen to 2 water molecules using 4 electrons from cytochrome c in the IMS and 4 protons from the mitochondrial matrix.</text>
</comment>
<comment type="pathway">
    <text evidence="2">Energy metabolism; oxidative phosphorylation.</text>
</comment>
<comment type="subunit">
    <text evidence="1 4">Component of the cytochrome c oxidase (complex IV, CIV), a multisubunit enzyme composed of 14 subunits. The complex is composed of a catalytic core of 3 subunits MT-CO1, MT-CO2 and MT-CO3, encoded in the mitochondrial DNA, and 11 supernumerary subunits COX4I, COX5A, COX5B, COX6A, COX6B, COX6C, COX7A, COX7B, COX7C, COX8 and NDUFA4, which are encoded in the nuclear genome. The complex exists as a monomer or a dimer and forms supercomplexes (SCs) in the inner mitochondrial membrane with NADH-ubiquinone oxidoreductase (complex I, CI) and ubiquinol-cytochrome c oxidoreductase (cytochrome b-c1 complex, complex III, CIII), resulting in different assemblies (supercomplex SCI(1)III(2)IV(1) and megacomplex MCI(2)III(2)IV(2)) (By similarity). Interacts with AFG1L (By similarity). Interacts with RAB5IF (By similarity).</text>
</comment>
<comment type="subcellular location">
    <subcellularLocation>
        <location evidence="1">Mitochondrion inner membrane</location>
        <topology evidence="1">Peripheral membrane protein</topology>
        <orientation evidence="1">Matrix side</orientation>
    </subcellularLocation>
</comment>
<comment type="PTM">
    <text evidence="4">In response to mitochondrial stress, the precursor protein is ubiquitinated by the SIFI complex in the cytoplasm before mitochondrial import, leading to its degradation. Within the SIFI complex, UBR4 initiates ubiquitin chain that are further elongated or branched by KCMF1.</text>
</comment>
<comment type="similarity">
    <text evidence="5">Belongs to the cytochrome c oxidase subunit 5A family.</text>
</comment>
<feature type="transit peptide" description="Mitochondrion" evidence="1">
    <location>
        <begin position="1"/>
        <end position="41"/>
    </location>
</feature>
<feature type="chain" id="PRO_0000355982" description="Cytochrome c oxidase subunit 5A, mitochondrial">
    <location>
        <begin position="42"/>
        <end position="150"/>
    </location>
</feature>
<feature type="short sequence motif" description="SIFI-degron" evidence="4">
    <location>
        <begin position="2"/>
        <end position="17"/>
    </location>
</feature>
<feature type="modified residue" description="N6-acetyllysine" evidence="3">
    <location>
        <position position="87"/>
    </location>
</feature>
<feature type="modified residue" description="N6-acetyllysine" evidence="3">
    <location>
        <position position="113"/>
    </location>
</feature>
<feature type="modified residue" description="Phosphothreonine" evidence="4">
    <location>
        <position position="141"/>
    </location>
</feature>
<evidence type="ECO:0000250" key="1">
    <source>
        <dbReference type="UniProtKB" id="P00426"/>
    </source>
</evidence>
<evidence type="ECO:0000250" key="2">
    <source>
        <dbReference type="UniProtKB" id="P00427"/>
    </source>
</evidence>
<evidence type="ECO:0000250" key="3">
    <source>
        <dbReference type="UniProtKB" id="P12787"/>
    </source>
</evidence>
<evidence type="ECO:0000250" key="4">
    <source>
        <dbReference type="UniProtKB" id="P20674"/>
    </source>
</evidence>
<evidence type="ECO:0000305" key="5"/>
<sequence>MLGAALRRCAVAATTWAGPRGHLHSARTPGPAAAIQSVRCYSHGSQETDEEFDARWVTYFNKPDIDAWELRKGINTLVTYDMVPEPKIIDAALRACRRLNDFASTVRILEAVKDKAGPHKEIYPYVIQELRPTLNELGISTPEELGLDKV</sequence>
<organism>
    <name type="scientific">Symphalangus syndactylus</name>
    <name type="common">Siamang</name>
    <name type="synonym">Hylobates syndactylus</name>
    <dbReference type="NCBI Taxonomy" id="9590"/>
    <lineage>
        <taxon>Eukaryota</taxon>
        <taxon>Metazoa</taxon>
        <taxon>Chordata</taxon>
        <taxon>Craniata</taxon>
        <taxon>Vertebrata</taxon>
        <taxon>Euteleostomi</taxon>
        <taxon>Mammalia</taxon>
        <taxon>Eutheria</taxon>
        <taxon>Euarchontoglires</taxon>
        <taxon>Primates</taxon>
        <taxon>Haplorrhini</taxon>
        <taxon>Catarrhini</taxon>
        <taxon>Hylobatidae</taxon>
        <taxon>Symphalangus</taxon>
    </lineage>
</organism>
<protein>
    <recommendedName>
        <fullName>Cytochrome c oxidase subunit 5A, mitochondrial</fullName>
    </recommendedName>
    <alternativeName>
        <fullName>Cytochrome c oxidase polypeptide Va</fullName>
    </alternativeName>
</protein>
<gene>
    <name type="primary">COX5A</name>
</gene>
<dbReference type="EMBL" id="DQ987243">
    <property type="protein sequence ID" value="ABK92290.1"/>
    <property type="molecule type" value="mRNA"/>
</dbReference>
<dbReference type="RefSeq" id="XP_055133728.1">
    <property type="nucleotide sequence ID" value="XM_055277753.2"/>
</dbReference>
<dbReference type="RefSeq" id="XP_063494828.1">
    <property type="nucleotide sequence ID" value="XM_063638758.1"/>
</dbReference>
<dbReference type="RefSeq" id="XP_063494829.1">
    <property type="nucleotide sequence ID" value="XM_063638759.1"/>
</dbReference>
<dbReference type="SMR" id="B0VYX6"/>
<dbReference type="GeneID" id="129482243"/>
<dbReference type="UniPathway" id="UPA00705"/>
<dbReference type="GO" id="GO:0005743">
    <property type="term" value="C:mitochondrial inner membrane"/>
    <property type="evidence" value="ECO:0007669"/>
    <property type="project" value="UniProtKB-SubCell"/>
</dbReference>
<dbReference type="GO" id="GO:0045277">
    <property type="term" value="C:respiratory chain complex IV"/>
    <property type="evidence" value="ECO:0007669"/>
    <property type="project" value="InterPro"/>
</dbReference>
<dbReference type="GO" id="GO:0046872">
    <property type="term" value="F:metal ion binding"/>
    <property type="evidence" value="ECO:0007669"/>
    <property type="project" value="UniProtKB-KW"/>
</dbReference>
<dbReference type="GO" id="GO:0006123">
    <property type="term" value="P:mitochondrial electron transport, cytochrome c to oxygen"/>
    <property type="evidence" value="ECO:0007669"/>
    <property type="project" value="InterPro"/>
</dbReference>
<dbReference type="CDD" id="cd00923">
    <property type="entry name" value="Cyt_c_Oxidase_Va"/>
    <property type="match status" value="1"/>
</dbReference>
<dbReference type="FunFam" id="1.25.40.40:FF:000002">
    <property type="entry name" value="cytochrome c oxidase subunit 5A, mitochondrial"/>
    <property type="match status" value="1"/>
</dbReference>
<dbReference type="Gene3D" id="1.25.40.40">
    <property type="entry name" value="Cytochrome c oxidase, subunit Va/VI"/>
    <property type="match status" value="1"/>
</dbReference>
<dbReference type="InterPro" id="IPR003204">
    <property type="entry name" value="Cyt_c_oxidase_su5A/6"/>
</dbReference>
<dbReference type="InterPro" id="IPR036545">
    <property type="entry name" value="Cyt_c_oxidase_su5A/6_sf"/>
</dbReference>
<dbReference type="PANTHER" id="PTHR14200">
    <property type="entry name" value="CYTOCHROME C OXIDASE POLYPEPTIDE"/>
    <property type="match status" value="1"/>
</dbReference>
<dbReference type="PANTHER" id="PTHR14200:SF16">
    <property type="entry name" value="CYTOCHROME C OXIDASE SUBUNIT 5A, MITOCHONDRIAL"/>
    <property type="match status" value="1"/>
</dbReference>
<dbReference type="Pfam" id="PF02284">
    <property type="entry name" value="COX5A"/>
    <property type="match status" value="1"/>
</dbReference>
<dbReference type="SUPFAM" id="SSF48479">
    <property type="entry name" value="Cytochrome c oxidase subunit E"/>
    <property type="match status" value="1"/>
</dbReference>
<keyword id="KW-0007">Acetylation</keyword>
<keyword id="KW-0349">Heme</keyword>
<keyword id="KW-0408">Iron</keyword>
<keyword id="KW-0472">Membrane</keyword>
<keyword id="KW-0479">Metal-binding</keyword>
<keyword id="KW-0496">Mitochondrion</keyword>
<keyword id="KW-0999">Mitochondrion inner membrane</keyword>
<keyword id="KW-0597">Phosphoprotein</keyword>
<keyword id="KW-0809">Transit peptide</keyword>
<keyword id="KW-0832">Ubl conjugation</keyword>
<proteinExistence type="evidence at transcript level"/>